<sequence>MFEIHPVKKVSVVIPVYNEQESLPELIRRTTKACESLGKEYEILLIDDGSSDNSAHMLVEASQAEGSHIVSILLNRNYGQHSAIMAGFSHVTGDLIITLDADLQNPPEEIPRLVAKADEGYDVVGTVRQNRQDSWFRKTASKMINRLIQRTTGKAMGDYGCMLRAYRRHIVDAMLHCHERSTFIPILANIFARRAIEIPVHHAEREFGESKYSFMRLINLMYDLVTCLTTTPLRMLSLLGSIIAIGGFSIAVLLVILRLTFGPQWAAEGVFMLFAVLFTFIGAQFIGMGLLGEYIGRIYTDVRARPRYFVQQVIRPSSKENE</sequence>
<protein>
    <recommendedName>
        <fullName evidence="1">Undecaprenyl-phosphate 4-deoxy-4-formamido-L-arabinose transferase</fullName>
        <ecNumber evidence="1">2.4.2.53</ecNumber>
    </recommendedName>
    <alternativeName>
        <fullName evidence="1">Undecaprenyl-phosphate Ara4FN transferase</fullName>
        <shortName evidence="1">Ara4FN transferase</shortName>
    </alternativeName>
</protein>
<organism>
    <name type="scientific">Escherichia coli (strain SMS-3-5 / SECEC)</name>
    <dbReference type="NCBI Taxonomy" id="439855"/>
    <lineage>
        <taxon>Bacteria</taxon>
        <taxon>Pseudomonadati</taxon>
        <taxon>Pseudomonadota</taxon>
        <taxon>Gammaproteobacteria</taxon>
        <taxon>Enterobacterales</taxon>
        <taxon>Enterobacteriaceae</taxon>
        <taxon>Escherichia</taxon>
    </lineage>
</organism>
<name>ARNC_ECOSM</name>
<feature type="chain" id="PRO_1000137914" description="Undecaprenyl-phosphate 4-deoxy-4-formamido-L-arabinose transferase">
    <location>
        <begin position="1"/>
        <end position="322"/>
    </location>
</feature>
<feature type="topological domain" description="Cytoplasmic" evidence="1">
    <location>
        <begin position="1"/>
        <end position="235"/>
    </location>
</feature>
<feature type="transmembrane region" description="Helical" evidence="1">
    <location>
        <begin position="236"/>
        <end position="256"/>
    </location>
</feature>
<feature type="topological domain" description="Periplasmic" evidence="1">
    <location>
        <begin position="257"/>
        <end position="269"/>
    </location>
</feature>
<feature type="transmembrane region" description="Helical" evidence="1">
    <location>
        <begin position="270"/>
        <end position="290"/>
    </location>
</feature>
<feature type="topological domain" description="Cytoplasmic" evidence="1">
    <location>
        <begin position="291"/>
        <end position="322"/>
    </location>
</feature>
<comment type="function">
    <text evidence="1">Catalyzes the transfer of 4-deoxy-4-formamido-L-arabinose from UDP to undecaprenyl phosphate. The modified arabinose is attached to lipid A and is required for resistance to polymyxin and cationic antimicrobial peptides.</text>
</comment>
<comment type="catalytic activity">
    <reaction evidence="1">
        <text>UDP-4-deoxy-4-formamido-beta-L-arabinose + di-trans,octa-cis-undecaprenyl phosphate = 4-deoxy-4-formamido-alpha-L-arabinopyranosyl di-trans,octa-cis-undecaprenyl phosphate + UDP</text>
        <dbReference type="Rhea" id="RHEA:27722"/>
        <dbReference type="ChEBI" id="CHEBI:58223"/>
        <dbReference type="ChEBI" id="CHEBI:58709"/>
        <dbReference type="ChEBI" id="CHEBI:58909"/>
        <dbReference type="ChEBI" id="CHEBI:60392"/>
        <dbReference type="EC" id="2.4.2.53"/>
    </reaction>
</comment>
<comment type="pathway">
    <text evidence="1">Glycolipid biosynthesis; 4-amino-4-deoxy-alpha-L-arabinose undecaprenyl phosphate biosynthesis; 4-amino-4-deoxy-alpha-L-arabinose undecaprenyl phosphate from UDP-4-deoxy-4-formamido-beta-L-arabinose and undecaprenyl phosphate: step 1/2.</text>
</comment>
<comment type="pathway">
    <text evidence="1">Bacterial outer membrane biogenesis; lipopolysaccharide biosynthesis.</text>
</comment>
<comment type="subcellular location">
    <subcellularLocation>
        <location evidence="1">Cell inner membrane</location>
        <topology evidence="1">Multi-pass membrane protein</topology>
    </subcellularLocation>
</comment>
<comment type="similarity">
    <text evidence="1">Belongs to the glycosyltransferase 2 family.</text>
</comment>
<evidence type="ECO:0000255" key="1">
    <source>
        <dbReference type="HAMAP-Rule" id="MF_01164"/>
    </source>
</evidence>
<dbReference type="EC" id="2.4.2.53" evidence="1"/>
<dbReference type="EMBL" id="CP000970">
    <property type="protein sequence ID" value="ACB19415.1"/>
    <property type="molecule type" value="Genomic_DNA"/>
</dbReference>
<dbReference type="RefSeq" id="WP_000461641.1">
    <property type="nucleotide sequence ID" value="NC_010498.1"/>
</dbReference>
<dbReference type="SMR" id="B1LLK8"/>
<dbReference type="CAZy" id="GT2">
    <property type="family name" value="Glycosyltransferase Family 2"/>
</dbReference>
<dbReference type="KEGG" id="ecm:EcSMS35_2408"/>
<dbReference type="HOGENOM" id="CLU_033536_0_0_6"/>
<dbReference type="UniPathway" id="UPA00030"/>
<dbReference type="UniPathway" id="UPA00036">
    <property type="reaction ID" value="UER00495"/>
</dbReference>
<dbReference type="Proteomes" id="UP000007011">
    <property type="component" value="Chromosome"/>
</dbReference>
<dbReference type="GO" id="GO:0005886">
    <property type="term" value="C:plasma membrane"/>
    <property type="evidence" value="ECO:0007669"/>
    <property type="project" value="UniProtKB-SubCell"/>
</dbReference>
<dbReference type="GO" id="GO:0016780">
    <property type="term" value="F:phosphotransferase activity, for other substituted phosphate groups"/>
    <property type="evidence" value="ECO:0007669"/>
    <property type="project" value="UniProtKB-UniRule"/>
</dbReference>
<dbReference type="GO" id="GO:0099621">
    <property type="term" value="F:undecaprenyl-phosphate 4-deoxy-4-formamido-L-arabinose transferase activity"/>
    <property type="evidence" value="ECO:0007669"/>
    <property type="project" value="UniProtKB-EC"/>
</dbReference>
<dbReference type="GO" id="GO:0036108">
    <property type="term" value="P:4-amino-4-deoxy-alpha-L-arabinopyranosyl undecaprenyl phosphate biosynthetic process"/>
    <property type="evidence" value="ECO:0007669"/>
    <property type="project" value="UniProtKB-UniRule"/>
</dbReference>
<dbReference type="GO" id="GO:0009245">
    <property type="term" value="P:lipid A biosynthetic process"/>
    <property type="evidence" value="ECO:0007669"/>
    <property type="project" value="UniProtKB-UniRule"/>
</dbReference>
<dbReference type="GO" id="GO:0009103">
    <property type="term" value="P:lipopolysaccharide biosynthetic process"/>
    <property type="evidence" value="ECO:0007669"/>
    <property type="project" value="UniProtKB-UniRule"/>
</dbReference>
<dbReference type="GO" id="GO:0046677">
    <property type="term" value="P:response to antibiotic"/>
    <property type="evidence" value="ECO:0007669"/>
    <property type="project" value="UniProtKB-KW"/>
</dbReference>
<dbReference type="CDD" id="cd04187">
    <property type="entry name" value="DPM1_like_bac"/>
    <property type="match status" value="1"/>
</dbReference>
<dbReference type="FunFam" id="3.90.550.10:FF:000019">
    <property type="entry name" value="Undecaprenyl-phosphate 4-deoxy-4-formamido-L-arabinose transferase"/>
    <property type="match status" value="1"/>
</dbReference>
<dbReference type="Gene3D" id="3.90.550.10">
    <property type="entry name" value="Spore Coat Polysaccharide Biosynthesis Protein SpsA, Chain A"/>
    <property type="match status" value="1"/>
</dbReference>
<dbReference type="HAMAP" id="MF_01164">
    <property type="entry name" value="ArnC_transfer"/>
    <property type="match status" value="1"/>
</dbReference>
<dbReference type="InterPro" id="IPR022857">
    <property type="entry name" value="ArnC_tfrase"/>
</dbReference>
<dbReference type="InterPro" id="IPR001173">
    <property type="entry name" value="Glyco_trans_2-like"/>
</dbReference>
<dbReference type="InterPro" id="IPR050256">
    <property type="entry name" value="Glycosyltransferase_2"/>
</dbReference>
<dbReference type="InterPro" id="IPR029044">
    <property type="entry name" value="Nucleotide-diphossugar_trans"/>
</dbReference>
<dbReference type="NCBIfam" id="NF007986">
    <property type="entry name" value="PRK10714.1"/>
    <property type="match status" value="1"/>
</dbReference>
<dbReference type="PANTHER" id="PTHR48090:SF3">
    <property type="entry name" value="UNDECAPRENYL-PHOSPHATE 4-DEOXY-4-FORMAMIDO-L-ARABINOSE TRANSFERASE"/>
    <property type="match status" value="1"/>
</dbReference>
<dbReference type="PANTHER" id="PTHR48090">
    <property type="entry name" value="UNDECAPRENYL-PHOSPHATE 4-DEOXY-4-FORMAMIDO-L-ARABINOSE TRANSFERASE-RELATED"/>
    <property type="match status" value="1"/>
</dbReference>
<dbReference type="Pfam" id="PF00535">
    <property type="entry name" value="Glycos_transf_2"/>
    <property type="match status" value="1"/>
</dbReference>
<dbReference type="SUPFAM" id="SSF53448">
    <property type="entry name" value="Nucleotide-diphospho-sugar transferases"/>
    <property type="match status" value="1"/>
</dbReference>
<proteinExistence type="inferred from homology"/>
<accession>B1LLK8</accession>
<keyword id="KW-0046">Antibiotic resistance</keyword>
<keyword id="KW-0997">Cell inner membrane</keyword>
<keyword id="KW-1003">Cell membrane</keyword>
<keyword id="KW-0328">Glycosyltransferase</keyword>
<keyword id="KW-0441">Lipid A biosynthesis</keyword>
<keyword id="KW-0444">Lipid biosynthesis</keyword>
<keyword id="KW-0443">Lipid metabolism</keyword>
<keyword id="KW-0448">Lipopolysaccharide biosynthesis</keyword>
<keyword id="KW-0472">Membrane</keyword>
<keyword id="KW-0808">Transferase</keyword>
<keyword id="KW-0812">Transmembrane</keyword>
<keyword id="KW-1133">Transmembrane helix</keyword>
<gene>
    <name evidence="1" type="primary">arnC</name>
    <name type="ordered locus">EcSMS35_2408</name>
</gene>
<reference key="1">
    <citation type="journal article" date="2008" name="J. Bacteriol.">
        <title>Insights into the environmental resistance gene pool from the genome sequence of the multidrug-resistant environmental isolate Escherichia coli SMS-3-5.</title>
        <authorList>
            <person name="Fricke W.F."/>
            <person name="Wright M.S."/>
            <person name="Lindell A.H."/>
            <person name="Harkins D.M."/>
            <person name="Baker-Austin C."/>
            <person name="Ravel J."/>
            <person name="Stepanauskas R."/>
        </authorList>
    </citation>
    <scope>NUCLEOTIDE SEQUENCE [LARGE SCALE GENOMIC DNA]</scope>
    <source>
        <strain>SMS-3-5 / SECEC</strain>
    </source>
</reference>